<keyword id="KW-0067">ATP-binding</keyword>
<keyword id="KW-0963">Cytoplasm</keyword>
<keyword id="KW-1015">Disulfide bond</keyword>
<keyword id="KW-0547">Nucleotide-binding</keyword>
<keyword id="KW-0694">RNA-binding</keyword>
<keyword id="KW-0808">Transferase</keyword>
<keyword id="KW-0819">tRNA processing</keyword>
<keyword id="KW-0820">tRNA-binding</keyword>
<protein>
    <recommendedName>
        <fullName evidence="1">tRNA-specific 2-thiouridylase MnmA</fullName>
        <ecNumber evidence="1">2.8.1.13</ecNumber>
    </recommendedName>
</protein>
<sequence length="372" mass="42150">MSNKDIRVVVGMSGGVDSSVTAHVLKEQGYDVIGIFMKNWDDTDENGVCTATEDYNDVIEVCNQIGIPYYAVNFEKEYWDKVFTYFLDEYKKGRTPNPDVMCNKEIKFKAFLDHAMNLGADYVATGHYARIHRHEDGHVEMLRGVDNNKDQTYFLNQLSQQQLSKVMFPIGDIEKSEVRRIAEEQGLVTAKKKDSTGICFIGEKNFKTFLSQYLPAQPGDMITLDGKKMGKHSGLMYYTIGQRHGLGIGGDGDPWFVVGKNLKDNVLYVEQGFHHDALYSDYLIASDYSFVNPEDNDLDQGFECTAKFRYRQKDTKVFVKRENDHALRVTFAEPVRAITPGQAVVFYQGDVCLGGATIDDVFKNEGQLNYVV</sequence>
<name>MNMA_STAAN</name>
<accession>Q99TM8</accession>
<proteinExistence type="evidence at protein level"/>
<organism>
    <name type="scientific">Staphylococcus aureus (strain N315)</name>
    <dbReference type="NCBI Taxonomy" id="158879"/>
    <lineage>
        <taxon>Bacteria</taxon>
        <taxon>Bacillati</taxon>
        <taxon>Bacillota</taxon>
        <taxon>Bacilli</taxon>
        <taxon>Bacillales</taxon>
        <taxon>Staphylococcaceae</taxon>
        <taxon>Staphylococcus</taxon>
    </lineage>
</organism>
<evidence type="ECO:0000255" key="1">
    <source>
        <dbReference type="HAMAP-Rule" id="MF_00144"/>
    </source>
</evidence>
<reference key="1">
    <citation type="journal article" date="2001" name="Lancet">
        <title>Whole genome sequencing of meticillin-resistant Staphylococcus aureus.</title>
        <authorList>
            <person name="Kuroda M."/>
            <person name="Ohta T."/>
            <person name="Uchiyama I."/>
            <person name="Baba T."/>
            <person name="Yuzawa H."/>
            <person name="Kobayashi I."/>
            <person name="Cui L."/>
            <person name="Oguchi A."/>
            <person name="Aoki K."/>
            <person name="Nagai Y."/>
            <person name="Lian J.-Q."/>
            <person name="Ito T."/>
            <person name="Kanamori M."/>
            <person name="Matsumaru H."/>
            <person name="Maruyama A."/>
            <person name="Murakami H."/>
            <person name="Hosoyama A."/>
            <person name="Mizutani-Ui Y."/>
            <person name="Takahashi N.K."/>
            <person name="Sawano T."/>
            <person name="Inoue R."/>
            <person name="Kaito C."/>
            <person name="Sekimizu K."/>
            <person name="Hirakawa H."/>
            <person name="Kuhara S."/>
            <person name="Goto S."/>
            <person name="Yabuzaki J."/>
            <person name="Kanehisa M."/>
            <person name="Yamashita A."/>
            <person name="Oshima K."/>
            <person name="Furuya K."/>
            <person name="Yoshino C."/>
            <person name="Shiba T."/>
            <person name="Hattori M."/>
            <person name="Ogasawara N."/>
            <person name="Hayashi H."/>
            <person name="Hiramatsu K."/>
        </authorList>
    </citation>
    <scope>NUCLEOTIDE SEQUENCE [LARGE SCALE GENOMIC DNA]</scope>
    <source>
        <strain>N315</strain>
    </source>
</reference>
<reference key="2">
    <citation type="submission" date="2007-10" db="UniProtKB">
        <title>Shotgun proteomic analysis of total and membrane protein extracts of S. aureus strain N315.</title>
        <authorList>
            <person name="Vaezzadeh A.R."/>
            <person name="Deshusses J."/>
            <person name="Lescuyer P."/>
            <person name="Hochstrasser D.F."/>
        </authorList>
    </citation>
    <scope>IDENTIFICATION BY MASS SPECTROMETRY [LARGE SCALE ANALYSIS]</scope>
    <source>
        <strain>N315</strain>
    </source>
</reference>
<feature type="chain" id="PRO_0000121675" description="tRNA-specific 2-thiouridylase MnmA">
    <location>
        <begin position="1"/>
        <end position="372"/>
    </location>
</feature>
<feature type="region of interest" description="Interaction with target base in tRNA" evidence="1">
    <location>
        <begin position="97"/>
        <end position="99"/>
    </location>
</feature>
<feature type="region of interest" description="Interaction with tRNA" evidence="1">
    <location>
        <begin position="149"/>
        <end position="151"/>
    </location>
</feature>
<feature type="region of interest" description="Interaction with tRNA" evidence="1">
    <location>
        <begin position="309"/>
        <end position="310"/>
    </location>
</feature>
<feature type="active site" description="Nucleophile" evidence="1">
    <location>
        <position position="102"/>
    </location>
</feature>
<feature type="active site" description="Cysteine persulfide intermediate" evidence="1">
    <location>
        <position position="199"/>
    </location>
</feature>
<feature type="binding site" evidence="1">
    <location>
        <begin position="11"/>
        <end position="18"/>
    </location>
    <ligand>
        <name>ATP</name>
        <dbReference type="ChEBI" id="CHEBI:30616"/>
    </ligand>
</feature>
<feature type="binding site" evidence="1">
    <location>
        <position position="37"/>
    </location>
    <ligand>
        <name>ATP</name>
        <dbReference type="ChEBI" id="CHEBI:30616"/>
    </ligand>
</feature>
<feature type="binding site" evidence="1">
    <location>
        <position position="126"/>
    </location>
    <ligand>
        <name>ATP</name>
        <dbReference type="ChEBI" id="CHEBI:30616"/>
    </ligand>
</feature>
<feature type="site" description="Interaction with tRNA" evidence="1">
    <location>
        <position position="127"/>
    </location>
</feature>
<feature type="site" description="Interaction with tRNA" evidence="1">
    <location>
        <position position="342"/>
    </location>
</feature>
<feature type="disulfide bond" description="Alternate" evidence="1">
    <location>
        <begin position="102"/>
        <end position="199"/>
    </location>
</feature>
<dbReference type="EC" id="2.8.1.13" evidence="1"/>
<dbReference type="EMBL" id="BA000018">
    <property type="protein sequence ID" value="BAB42713.1"/>
    <property type="molecule type" value="Genomic_DNA"/>
</dbReference>
<dbReference type="PIR" id="D89944">
    <property type="entry name" value="D89944"/>
</dbReference>
<dbReference type="RefSeq" id="WP_000066097.1">
    <property type="nucleotide sequence ID" value="NC_002745.2"/>
</dbReference>
<dbReference type="SMR" id="Q99TM8"/>
<dbReference type="EnsemblBacteria" id="BAB42713">
    <property type="protein sequence ID" value="BAB42713"/>
    <property type="gene ID" value="BAB42713"/>
</dbReference>
<dbReference type="KEGG" id="sau:SA1449"/>
<dbReference type="HOGENOM" id="CLU_035188_1_0_9"/>
<dbReference type="GO" id="GO:0005737">
    <property type="term" value="C:cytoplasm"/>
    <property type="evidence" value="ECO:0007669"/>
    <property type="project" value="UniProtKB-SubCell"/>
</dbReference>
<dbReference type="GO" id="GO:0005524">
    <property type="term" value="F:ATP binding"/>
    <property type="evidence" value="ECO:0007669"/>
    <property type="project" value="UniProtKB-KW"/>
</dbReference>
<dbReference type="GO" id="GO:0000049">
    <property type="term" value="F:tRNA binding"/>
    <property type="evidence" value="ECO:0007669"/>
    <property type="project" value="UniProtKB-KW"/>
</dbReference>
<dbReference type="GO" id="GO:0103016">
    <property type="term" value="F:tRNA-uridine 2-sulfurtransferase activity"/>
    <property type="evidence" value="ECO:0007669"/>
    <property type="project" value="UniProtKB-EC"/>
</dbReference>
<dbReference type="GO" id="GO:0002143">
    <property type="term" value="P:tRNA wobble position uridine thiolation"/>
    <property type="evidence" value="ECO:0007669"/>
    <property type="project" value="TreeGrafter"/>
</dbReference>
<dbReference type="CDD" id="cd01998">
    <property type="entry name" value="MnmA_TRMU-like"/>
    <property type="match status" value="1"/>
</dbReference>
<dbReference type="FunFam" id="2.30.30.280:FF:000001">
    <property type="entry name" value="tRNA-specific 2-thiouridylase MnmA"/>
    <property type="match status" value="1"/>
</dbReference>
<dbReference type="FunFam" id="2.40.30.10:FF:000023">
    <property type="entry name" value="tRNA-specific 2-thiouridylase MnmA"/>
    <property type="match status" value="1"/>
</dbReference>
<dbReference type="FunFam" id="3.40.50.620:FF:000004">
    <property type="entry name" value="tRNA-specific 2-thiouridylase MnmA"/>
    <property type="match status" value="1"/>
</dbReference>
<dbReference type="Gene3D" id="2.30.30.280">
    <property type="entry name" value="Adenine nucleotide alpha hydrolases-like domains"/>
    <property type="match status" value="1"/>
</dbReference>
<dbReference type="Gene3D" id="3.40.50.620">
    <property type="entry name" value="HUPs"/>
    <property type="match status" value="1"/>
</dbReference>
<dbReference type="Gene3D" id="2.40.30.10">
    <property type="entry name" value="Translation factors"/>
    <property type="match status" value="1"/>
</dbReference>
<dbReference type="HAMAP" id="MF_00144">
    <property type="entry name" value="tRNA_thiouridyl_MnmA"/>
    <property type="match status" value="1"/>
</dbReference>
<dbReference type="InterPro" id="IPR004506">
    <property type="entry name" value="MnmA-like"/>
</dbReference>
<dbReference type="InterPro" id="IPR046885">
    <property type="entry name" value="MnmA-like_C"/>
</dbReference>
<dbReference type="InterPro" id="IPR046884">
    <property type="entry name" value="MnmA-like_central"/>
</dbReference>
<dbReference type="InterPro" id="IPR023382">
    <property type="entry name" value="MnmA-like_central_sf"/>
</dbReference>
<dbReference type="InterPro" id="IPR014729">
    <property type="entry name" value="Rossmann-like_a/b/a_fold"/>
</dbReference>
<dbReference type="NCBIfam" id="NF001138">
    <property type="entry name" value="PRK00143.1"/>
    <property type="match status" value="1"/>
</dbReference>
<dbReference type="NCBIfam" id="TIGR00420">
    <property type="entry name" value="trmU"/>
    <property type="match status" value="1"/>
</dbReference>
<dbReference type="PANTHER" id="PTHR11933:SF5">
    <property type="entry name" value="MITOCHONDRIAL TRNA-SPECIFIC 2-THIOURIDYLASE 1"/>
    <property type="match status" value="1"/>
</dbReference>
<dbReference type="PANTHER" id="PTHR11933">
    <property type="entry name" value="TRNA 5-METHYLAMINOMETHYL-2-THIOURIDYLATE -METHYLTRANSFERASE"/>
    <property type="match status" value="1"/>
</dbReference>
<dbReference type="Pfam" id="PF03054">
    <property type="entry name" value="tRNA_Me_trans"/>
    <property type="match status" value="1"/>
</dbReference>
<dbReference type="Pfam" id="PF20258">
    <property type="entry name" value="tRNA_Me_trans_C"/>
    <property type="match status" value="1"/>
</dbReference>
<dbReference type="Pfam" id="PF20259">
    <property type="entry name" value="tRNA_Me_trans_M"/>
    <property type="match status" value="1"/>
</dbReference>
<dbReference type="SUPFAM" id="SSF52402">
    <property type="entry name" value="Adenine nucleotide alpha hydrolases-like"/>
    <property type="match status" value="1"/>
</dbReference>
<comment type="function">
    <text evidence="1">Catalyzes the 2-thiolation of uridine at the wobble position (U34) of tRNA, leading to the formation of s(2)U34.</text>
</comment>
<comment type="catalytic activity">
    <reaction evidence="1">
        <text>S-sulfanyl-L-cysteinyl-[protein] + uridine(34) in tRNA + AH2 + ATP = 2-thiouridine(34) in tRNA + L-cysteinyl-[protein] + A + AMP + diphosphate + H(+)</text>
        <dbReference type="Rhea" id="RHEA:47032"/>
        <dbReference type="Rhea" id="RHEA-COMP:10131"/>
        <dbReference type="Rhea" id="RHEA-COMP:11726"/>
        <dbReference type="Rhea" id="RHEA-COMP:11727"/>
        <dbReference type="Rhea" id="RHEA-COMP:11728"/>
        <dbReference type="ChEBI" id="CHEBI:13193"/>
        <dbReference type="ChEBI" id="CHEBI:15378"/>
        <dbReference type="ChEBI" id="CHEBI:17499"/>
        <dbReference type="ChEBI" id="CHEBI:29950"/>
        <dbReference type="ChEBI" id="CHEBI:30616"/>
        <dbReference type="ChEBI" id="CHEBI:33019"/>
        <dbReference type="ChEBI" id="CHEBI:61963"/>
        <dbReference type="ChEBI" id="CHEBI:65315"/>
        <dbReference type="ChEBI" id="CHEBI:87170"/>
        <dbReference type="ChEBI" id="CHEBI:456215"/>
        <dbReference type="EC" id="2.8.1.13"/>
    </reaction>
</comment>
<comment type="subcellular location">
    <subcellularLocation>
        <location evidence="1">Cytoplasm</location>
    </subcellularLocation>
</comment>
<comment type="similarity">
    <text evidence="1">Belongs to the MnmA/TRMU family.</text>
</comment>
<gene>
    <name evidence="1" type="primary">mnmA</name>
    <name type="synonym">trmU</name>
    <name type="ordered locus">SA1449</name>
</gene>